<name>NDEL1_MOUSE</name>
<proteinExistence type="evidence at protein level"/>
<accession>Q9ERR1</accession>
<accession>Q9D0Q4</accession>
<accession>Q9EPT6</accession>
<comment type="function">
    <text evidence="2 3 9 12 13 15 16 17">Required for organization of the cellular microtubule array and microtubule anchoring at the centrosome. May regulate microtubule organization at least in part by targeting the microtubule severing protein KATNA1 to the centrosome. Also positively regulates the activity of the minus-end directed microtubule motor protein dynein. May enhance dynein-mediated microtubule sliding by targeting dynein to the microtubule plus ends. Required for several dynein- and microtubule-dependent processes such as the maintenance of Golgi integrity, the centripetal motion of secretory vesicles and the coupling of the nucleus and centrosome. Also required during brain development for the migration of newly formed neurons from the ventricular/subventricular zone toward the cortical plate. Plays a role, together with DISC1, in the regulation of neurite outgrowth. Required for mitosis in some cell types but appears to be dispensible for mitosis in cortical neuronal progenitors, which instead requires NDE1. Facilitates the polymerization of neurofilaments from the individual subunits NEFH and NEFL. Positively regulates lysosome peripheral distribution and ruffled border formation in osteoclasts (PubMed:27777970). Plays a role, together with DISC1, in the regulation of neurite outgrowth (By similarity). May act as a RAB9A/B effector that tethers RAB9-associated late endosomes to the dynein motor for their retrograde transport to the trans-Golgi network (By similarity).</text>
</comment>
<comment type="subunit">
    <text evidence="1 3 17">Interacts with PLEKHM1 (via N- and C-terminus) (PubMed:27777970). Interacts with dynactin, PCM1 and PCNT. Interacts (via C-terminus) with CENPF (By similarity). Self-associates. Interacts with DISC1, dynein, tubulin gamma, KATNA1, KATNB1, microtubules, PAFAHB1 and YWHAE. Interacts directly with NEFL and indirectly with NEFH. Interacts with ZNF365 (By similarity). Interacts with GTP-bound RAB9A; the interaction may lead to RAB9A-dynein motor tethering (By similarity).</text>
</comment>
<comment type="interaction">
    <interactant intactId="EBI-646668">
        <id>Q9ERR1</id>
    </interactant>
    <interactant intactId="EBI-646668">
        <id>Q9ERR1</id>
        <label>Ndel1</label>
    </interactant>
    <organismsDiffer>false</organismsDiffer>
    <experiments>3</experiments>
</comment>
<comment type="interaction">
    <interactant intactId="EBI-646668">
        <id>Q9ERR1</id>
    </interactant>
    <interactant intactId="EBI-917499">
        <id>P63005</id>
        <label>Pafah1b1</label>
    </interactant>
    <organismsDiffer>false</organismsDiffer>
    <experiments>9</experiments>
</comment>
<comment type="interaction">
    <interactant intactId="EBI-646668">
        <id>Q9ERR1</id>
    </interactant>
    <interactant intactId="EBI-356480">
        <id>P62259</id>
        <label>Ywhae</label>
    </interactant>
    <organismsDiffer>false</organismsDiffer>
    <experiments>7</experiments>
</comment>
<comment type="interaction">
    <interactant intactId="EBI-646668">
        <id>Q9ERR1</id>
    </interactant>
    <interactant intactId="EBI-529989">
        <id>Q9NRI5</id>
        <label>DISC1</label>
    </interactant>
    <organismsDiffer>true</organismsDiffer>
    <experiments>2</experiments>
</comment>
<comment type="subcellular location">
    <subcellularLocation>
        <location>Cytoplasm</location>
        <location>Cytoskeleton</location>
    </subcellularLocation>
    <subcellularLocation>
        <location>Cytoplasm</location>
        <location>Cytoskeleton</location>
        <location>Microtubule organizing center</location>
        <location>Centrosome</location>
    </subcellularLocation>
    <subcellularLocation>
        <location evidence="1">Chromosome</location>
        <location evidence="1">Centromere</location>
        <location evidence="1">Kinetochore</location>
    </subcellularLocation>
    <subcellularLocation>
        <location>Cytoplasm</location>
        <location>Cytoskeleton</location>
        <location>Spindle</location>
    </subcellularLocation>
    <text evidence="1">Localizes to the kinetochore in a CENPF-dependent manner. Colocalizes with DISC1 in the perinuclear region, including the centrosome (By similarity). Localizes to the interphase centrosome and the mitotic spindle. Localizes to the cell body of the motor neurons and colocalizes with assembled neurofilaments within axonal processes. Localizes to the microtubules of the manchette in elongated spermatids. Localizes to the interphase centrosome and the mitotic spindle.</text>
</comment>
<comment type="alternative products">
    <event type="alternative splicing"/>
    <isoform>
        <id>Q9ERR1-1</id>
        <name>1</name>
        <sequence type="displayed"/>
    </isoform>
    <isoform>
        <id>Q9ERR1-2</id>
        <name>2</name>
        <sequence type="described" ref="VSP_019311"/>
    </isoform>
</comment>
<comment type="tissue specificity">
    <text evidence="6 7 8 11">Expressed in brain, liver, lung and testis (at protein level). Expressed in brain, epididymis, eye, heart, kidney, large intestine, liver, ovary, pancreas, prostate, skeletal muscle, smooth muscle, spleen, submaxillary gland, testis, thymus and thyroid. Within the brain expression is pronounced in the cortex, hippocampus, olfactory bulb, striatum, thalamic and hypothalamic structures and in the molecular layer of the cerebellum. Largely excluded from cortical progenitor cells which express NDE1.</text>
</comment>
<comment type="developmental stage">
    <text evidence="7 8 11 13 14">Expression in the brain is detectable from 7 dpc, rises at 15 dpc and 17 dpc and peaks at P5. Enriched in the developing cortex, particularly in neuroblasts of the ventricular zone and postmitotic migrating cortical plate neurons. Interaction with DISC1 in the brain is developmentally regulated, peaking at 17 dpc and decreasing at P16 so as to be undetectable in the adult brain. Expressed in the testis from P12, when zygotene spermatocytes first appear, and expression subsequently rises at P27.</text>
</comment>
<comment type="PTM">
    <text evidence="1 6 9 16">Phosphorylated by CDK1 and MAPK1 (By similarity). Phosphorylated in mitosis. Phosphorylated by CDK5. Phosphorylation by CDK5 promotes interaction with KATNA1 and YWHAE.</text>
</comment>
<comment type="PTM">
    <text evidence="1">Palmitoylation at Cys-273 reduces affinity for dynein.</text>
</comment>
<comment type="similarity">
    <text evidence="20">Belongs to the nudE family.</text>
</comment>
<reference key="1">
    <citation type="journal article" date="2000" name="Neuron">
        <title>A LIS1/NUDEL/cytoplasmic dynein heavy chain complex in the developing and adult nervous system.</title>
        <authorList>
            <person name="Sasaki S."/>
            <person name="Shionoya A."/>
            <person name="Ishida M."/>
            <person name="Gambello M.J."/>
            <person name="Yingling J."/>
            <person name="Wynshaw-Boris A."/>
            <person name="Hirotsune S."/>
        </authorList>
    </citation>
    <scope>NUCLEOTIDE SEQUENCE [MRNA] (ISOFORM 1)</scope>
    <scope>SELF-ASSOCIATION</scope>
    <scope>INTERACTION WITH PAFAH1B1 AND DYNEIN</scope>
    <scope>TISSUE SPECIFICITY</scope>
    <scope>PHOSPHORYLATION BY CDK5</scope>
</reference>
<reference key="2">
    <citation type="journal article" date="2001" name="Mech. Dev.">
        <title>NudE-L, a novel Lis1-interacting protein, belongs to a family of vertebrate coiled-coil proteins.</title>
        <authorList>
            <person name="Sweeney K.J."/>
            <person name="Prokscha A."/>
            <person name="Eichele G."/>
        </authorList>
    </citation>
    <scope>NUCLEOTIDE SEQUENCE [MRNA] (ISOFORM 1)</scope>
    <scope>INTERACTION WITH PAFAH1B1</scope>
    <scope>TISSUE SPECIFICITY</scope>
    <scope>DEVELOPMENTAL STAGE</scope>
    <source>
        <strain>Swiss Webster / NIH</strain>
    </source>
</reference>
<reference key="3">
    <citation type="journal article" date="2005" name="Science">
        <title>The transcriptional landscape of the mammalian genome.</title>
        <authorList>
            <person name="Carninci P."/>
            <person name="Kasukawa T."/>
            <person name="Katayama S."/>
            <person name="Gough J."/>
            <person name="Frith M.C."/>
            <person name="Maeda N."/>
            <person name="Oyama R."/>
            <person name="Ravasi T."/>
            <person name="Lenhard B."/>
            <person name="Wells C."/>
            <person name="Kodzius R."/>
            <person name="Shimokawa K."/>
            <person name="Bajic V.B."/>
            <person name="Brenner S.E."/>
            <person name="Batalov S."/>
            <person name="Forrest A.R."/>
            <person name="Zavolan M."/>
            <person name="Davis M.J."/>
            <person name="Wilming L.G."/>
            <person name="Aidinis V."/>
            <person name="Allen J.E."/>
            <person name="Ambesi-Impiombato A."/>
            <person name="Apweiler R."/>
            <person name="Aturaliya R.N."/>
            <person name="Bailey T.L."/>
            <person name="Bansal M."/>
            <person name="Baxter L."/>
            <person name="Beisel K.W."/>
            <person name="Bersano T."/>
            <person name="Bono H."/>
            <person name="Chalk A.M."/>
            <person name="Chiu K.P."/>
            <person name="Choudhary V."/>
            <person name="Christoffels A."/>
            <person name="Clutterbuck D.R."/>
            <person name="Crowe M.L."/>
            <person name="Dalla E."/>
            <person name="Dalrymple B.P."/>
            <person name="de Bono B."/>
            <person name="Della Gatta G."/>
            <person name="di Bernardo D."/>
            <person name="Down T."/>
            <person name="Engstrom P."/>
            <person name="Fagiolini M."/>
            <person name="Faulkner G."/>
            <person name="Fletcher C.F."/>
            <person name="Fukushima T."/>
            <person name="Furuno M."/>
            <person name="Futaki S."/>
            <person name="Gariboldi M."/>
            <person name="Georgii-Hemming P."/>
            <person name="Gingeras T.R."/>
            <person name="Gojobori T."/>
            <person name="Green R.E."/>
            <person name="Gustincich S."/>
            <person name="Harbers M."/>
            <person name="Hayashi Y."/>
            <person name="Hensch T.K."/>
            <person name="Hirokawa N."/>
            <person name="Hill D."/>
            <person name="Huminiecki L."/>
            <person name="Iacono M."/>
            <person name="Ikeo K."/>
            <person name="Iwama A."/>
            <person name="Ishikawa T."/>
            <person name="Jakt M."/>
            <person name="Kanapin A."/>
            <person name="Katoh M."/>
            <person name="Kawasawa Y."/>
            <person name="Kelso J."/>
            <person name="Kitamura H."/>
            <person name="Kitano H."/>
            <person name="Kollias G."/>
            <person name="Krishnan S.P."/>
            <person name="Kruger A."/>
            <person name="Kummerfeld S.K."/>
            <person name="Kurochkin I.V."/>
            <person name="Lareau L.F."/>
            <person name="Lazarevic D."/>
            <person name="Lipovich L."/>
            <person name="Liu J."/>
            <person name="Liuni S."/>
            <person name="McWilliam S."/>
            <person name="Madan Babu M."/>
            <person name="Madera M."/>
            <person name="Marchionni L."/>
            <person name="Matsuda H."/>
            <person name="Matsuzawa S."/>
            <person name="Miki H."/>
            <person name="Mignone F."/>
            <person name="Miyake S."/>
            <person name="Morris K."/>
            <person name="Mottagui-Tabar S."/>
            <person name="Mulder N."/>
            <person name="Nakano N."/>
            <person name="Nakauchi H."/>
            <person name="Ng P."/>
            <person name="Nilsson R."/>
            <person name="Nishiguchi S."/>
            <person name="Nishikawa S."/>
            <person name="Nori F."/>
            <person name="Ohara O."/>
            <person name="Okazaki Y."/>
            <person name="Orlando V."/>
            <person name="Pang K.C."/>
            <person name="Pavan W.J."/>
            <person name="Pavesi G."/>
            <person name="Pesole G."/>
            <person name="Petrovsky N."/>
            <person name="Piazza S."/>
            <person name="Reed J."/>
            <person name="Reid J.F."/>
            <person name="Ring B.Z."/>
            <person name="Ringwald M."/>
            <person name="Rost B."/>
            <person name="Ruan Y."/>
            <person name="Salzberg S.L."/>
            <person name="Sandelin A."/>
            <person name="Schneider C."/>
            <person name="Schoenbach C."/>
            <person name="Sekiguchi K."/>
            <person name="Semple C.A."/>
            <person name="Seno S."/>
            <person name="Sessa L."/>
            <person name="Sheng Y."/>
            <person name="Shibata Y."/>
            <person name="Shimada H."/>
            <person name="Shimada K."/>
            <person name="Silva D."/>
            <person name="Sinclair B."/>
            <person name="Sperling S."/>
            <person name="Stupka E."/>
            <person name="Sugiura K."/>
            <person name="Sultana R."/>
            <person name="Takenaka Y."/>
            <person name="Taki K."/>
            <person name="Tammoja K."/>
            <person name="Tan S.L."/>
            <person name="Tang S."/>
            <person name="Taylor M.S."/>
            <person name="Tegner J."/>
            <person name="Teichmann S.A."/>
            <person name="Ueda H.R."/>
            <person name="van Nimwegen E."/>
            <person name="Verardo R."/>
            <person name="Wei C.L."/>
            <person name="Yagi K."/>
            <person name="Yamanishi H."/>
            <person name="Zabarovsky E."/>
            <person name="Zhu S."/>
            <person name="Zimmer A."/>
            <person name="Hide W."/>
            <person name="Bult C."/>
            <person name="Grimmond S.M."/>
            <person name="Teasdale R.D."/>
            <person name="Liu E.T."/>
            <person name="Brusic V."/>
            <person name="Quackenbush J."/>
            <person name="Wahlestedt C."/>
            <person name="Mattick J.S."/>
            <person name="Hume D.A."/>
            <person name="Kai C."/>
            <person name="Sasaki D."/>
            <person name="Tomaru Y."/>
            <person name="Fukuda S."/>
            <person name="Kanamori-Katayama M."/>
            <person name="Suzuki M."/>
            <person name="Aoki J."/>
            <person name="Arakawa T."/>
            <person name="Iida J."/>
            <person name="Imamura K."/>
            <person name="Itoh M."/>
            <person name="Kato T."/>
            <person name="Kawaji H."/>
            <person name="Kawagashira N."/>
            <person name="Kawashima T."/>
            <person name="Kojima M."/>
            <person name="Kondo S."/>
            <person name="Konno H."/>
            <person name="Nakano K."/>
            <person name="Ninomiya N."/>
            <person name="Nishio T."/>
            <person name="Okada M."/>
            <person name="Plessy C."/>
            <person name="Shibata K."/>
            <person name="Shiraki T."/>
            <person name="Suzuki S."/>
            <person name="Tagami M."/>
            <person name="Waki K."/>
            <person name="Watahiki A."/>
            <person name="Okamura-Oho Y."/>
            <person name="Suzuki H."/>
            <person name="Kawai J."/>
            <person name="Hayashizaki Y."/>
        </authorList>
    </citation>
    <scope>NUCLEOTIDE SEQUENCE [LARGE SCALE MRNA] (ISOFORM 2)</scope>
    <source>
        <strain>C57BL/6J</strain>
    </source>
</reference>
<reference key="4">
    <citation type="journal article" date="2009" name="PLoS Biol.">
        <title>Lineage-specific biology revealed by a finished genome assembly of the mouse.</title>
        <authorList>
            <person name="Church D.M."/>
            <person name="Goodstadt L."/>
            <person name="Hillier L.W."/>
            <person name="Zody M.C."/>
            <person name="Goldstein S."/>
            <person name="She X."/>
            <person name="Bult C.J."/>
            <person name="Agarwala R."/>
            <person name="Cherry J.L."/>
            <person name="DiCuccio M."/>
            <person name="Hlavina W."/>
            <person name="Kapustin Y."/>
            <person name="Meric P."/>
            <person name="Maglott D."/>
            <person name="Birtle Z."/>
            <person name="Marques A.C."/>
            <person name="Graves T."/>
            <person name="Zhou S."/>
            <person name="Teague B."/>
            <person name="Potamousis K."/>
            <person name="Churas C."/>
            <person name="Place M."/>
            <person name="Herschleb J."/>
            <person name="Runnheim R."/>
            <person name="Forrest D."/>
            <person name="Amos-Landgraf J."/>
            <person name="Schwartz D.C."/>
            <person name="Cheng Z."/>
            <person name="Lindblad-Toh K."/>
            <person name="Eichler E.E."/>
            <person name="Ponting C.P."/>
        </authorList>
    </citation>
    <scope>NUCLEOTIDE SEQUENCE [LARGE SCALE GENOMIC DNA]</scope>
    <source>
        <strain>C57BL/6J</strain>
    </source>
</reference>
<reference key="5">
    <citation type="journal article" date="2004" name="Genome Res.">
        <title>The status, quality, and expansion of the NIH full-length cDNA project: the Mammalian Gene Collection (MGC).</title>
        <authorList>
            <consortium name="The MGC Project Team"/>
        </authorList>
    </citation>
    <scope>NUCLEOTIDE SEQUENCE [LARGE SCALE MRNA] (ISOFORMS 1 AND 2)</scope>
    <source>
        <strain>C57BL/6J</strain>
        <tissue>Brain</tissue>
    </source>
</reference>
<reference key="6">
    <citation type="journal article" date="2000" name="Neuron">
        <title>NUDEL is a novel cdk5 substrate that associates with LIS1 and cytoplasmic dynein.</title>
        <authorList>
            <person name="Niethammer M."/>
            <person name="Smith D.S."/>
            <person name="Ayala R."/>
            <person name="Peng J."/>
            <person name="Ko J."/>
            <person name="Lee M.-S."/>
            <person name="Morabito M."/>
            <person name="Tsai L.-H."/>
        </authorList>
    </citation>
    <scope>INTERACTION WITH PAFAH1B1</scope>
    <scope>SUBCELLULAR LOCATION</scope>
    <scope>TISSUE SPECIFICITY</scope>
    <scope>DEVELOPMENTAL STAGE</scope>
</reference>
<reference key="7">
    <citation type="journal article" date="2003" name="Nat. Genet.">
        <title>14-3-3epsilon is important for neuronal migration by binding to NUDEL: a molecular explanation for Miller-Dieker syndrome.</title>
        <authorList>
            <person name="Toyo-oka K."/>
            <person name="Shionoya A."/>
            <person name="Gambello M.J."/>
            <person name="Cardoso C."/>
            <person name="Leventer R."/>
            <person name="Ward H.L."/>
            <person name="Ayala R."/>
            <person name="Tsai L.-H."/>
            <person name="Dobyns W."/>
            <person name="Ledbetter D."/>
            <person name="Hirotsune S."/>
            <person name="Wynshaw-Boris A."/>
        </authorList>
    </citation>
    <scope>FUNCTION</scope>
    <scope>INTERACTION WITH PAFAH1B1 AND YWHAE</scope>
    <scope>SUBCELLULAR LOCATION</scope>
    <scope>PHOSPHORYLATION BY CDK5</scope>
    <scope>MUTAGENESIS OF SER-198; THR-219 AND SER-231</scope>
</reference>
<reference key="8">
    <citation type="journal article" date="2004" name="FEBS Lett.">
        <title>Expression of NUDEL in manchette and its implication in spermatogenesis.</title>
        <authorList>
            <person name="Yamaguchi N."/>
            <person name="Takanezawa Y."/>
            <person name="Koizumi H."/>
            <person name="Umezu-Goto M."/>
            <person name="Aoki J."/>
            <person name="Arai H."/>
        </authorList>
    </citation>
    <scope>SUBCELLULAR LOCATION</scope>
    <scope>TISSUE SPECIFICITY</scope>
    <scope>DEVELOPMENTAL STAGE</scope>
</reference>
<reference key="9">
    <citation type="journal article" date="2004" name="Mol. Cell. Neurosci.">
        <title>Disrupted in Schizophrenia 1 and Nudel form a neurodevelopmentally regulated protein complex: implications for schizophrenia and other major neurological disorders.</title>
        <authorList>
            <person name="Brandon N.J."/>
            <person name="Handford E.J."/>
            <person name="Schurov I."/>
            <person name="Rain J.-C."/>
            <person name="Pelling M."/>
            <person name="Duran-Jimeniz B."/>
            <person name="Camargo L.M."/>
            <person name="Oliver K.R."/>
            <person name="Beher D."/>
            <person name="Shearman M.S."/>
            <person name="Whiting P.J."/>
        </authorList>
    </citation>
    <scope>INTERACTION WITH DISC1; DYNEIN; TUBULIN GAMMA AND MICROTUBULES</scope>
    <scope>SUBCELLULAR LOCATION</scope>
    <scope>MUTAGENESIS OF LEU-266 AND GLU-267</scope>
</reference>
<reference key="10">
    <citation type="journal article" date="2004" name="Nat. Cell Biol.">
        <title>A NUDEL-dependent mechanism of neurofilament assembly regulates the integrity of CNS neurons.</title>
        <authorList>
            <person name="Nguyen M.-D."/>
            <person name="Shu T."/>
            <person name="Sanada K."/>
            <person name="Lariviere R.C."/>
            <person name="Tseng H.-C."/>
            <person name="Park S.K."/>
            <person name="Julien J.-P."/>
            <person name="Tsai L.-H."/>
        </authorList>
    </citation>
    <scope>FUNCTION</scope>
    <scope>INTERACTION WITH NEFH; NEFL AND PAFAH1B1</scope>
    <scope>SUBCELLULAR LOCATION</scope>
</reference>
<reference key="11">
    <citation type="journal article" date="2004" name="Neuron">
        <title>Ndel1 operates in a common pathway with LIS1 and cytoplasmic dynein to regulate cortical neuronal positioning.</title>
        <authorList>
            <person name="Shu T."/>
            <person name="Ayala R."/>
            <person name="Nguyen M.-D."/>
            <person name="Xie Z."/>
            <person name="Gleeson J.G."/>
            <person name="Tsai L.-H."/>
        </authorList>
    </citation>
    <scope>FUNCTION</scope>
    <scope>INTERACTION WITH DYNEIN</scope>
    <scope>SUBCELLULAR LOCATION</scope>
    <scope>DEVELOPMENTAL STAGE</scope>
</reference>
<reference key="12">
    <citation type="journal article" date="2004" name="Neuron">
        <title>Mitotic spindle regulation by Nde1 controls cerebral cortical size.</title>
        <authorList>
            <person name="Feng Y."/>
            <person name="Walsh C.A."/>
        </authorList>
    </citation>
    <scope>DEVELOPMENTAL STAGE</scope>
</reference>
<reference key="13">
    <citation type="journal article" date="2005" name="Hum. Mol. Genet.">
        <title>Recruitment of katanin p60 by phosphorylated NDEL1, an LIS1 interacting protein, is essential for mitotic cell division and neuronal migration.</title>
        <authorList>
            <person name="Toyo-Oka K."/>
            <person name="Sasaki S."/>
            <person name="Yano Y."/>
            <person name="Mori D."/>
            <person name="Kobayashi T."/>
            <person name="Toyoshima Y.Y."/>
            <person name="Tokuoka S.M."/>
            <person name="Ishii S."/>
            <person name="Shimizu T."/>
            <person name="Muramatsu M."/>
            <person name="Hiraiwa N."/>
            <person name="Yoshiki A."/>
            <person name="Wynshaw-Boris A."/>
            <person name="Hirotsune S."/>
        </authorList>
    </citation>
    <scope>FUNCTION</scope>
    <scope>INTERACTION WITH KATNA1 AND KATNB1</scope>
    <scope>SUBCELLULAR LOCATION</scope>
    <scope>PHOSPHORYLATION BY CDK5</scope>
    <scope>MUTAGENESIS OF SER-198; THR-219 AND SER-231</scope>
</reference>
<reference key="14">
    <citation type="journal article" date="2005" name="Mol. Cell. Biol.">
        <title>Complete loss of Ndel1 results in neuronal migration defects and early embryonic lethality.</title>
        <authorList>
            <person name="Sasaki S."/>
            <person name="Mori D."/>
            <person name="Toyo-oka K."/>
            <person name="Chen A."/>
            <person name="Garrett-Beal L."/>
            <person name="Muramatsu M."/>
            <person name="Miyagawa S."/>
            <person name="Hiraiwa N."/>
            <person name="Yoshiki A."/>
            <person name="Wynshaw-Boris A."/>
            <person name="Hirotsune S."/>
        </authorList>
    </citation>
    <scope>FUNCTION</scope>
</reference>
<reference key="15">
    <citation type="journal article" date="2005" name="Mol. Cell. Neurosci.">
        <title>Subcellular targeting of DISC1 is dependent on a domain independent from the Nudel binding site.</title>
        <authorList>
            <person name="Brandon N.J."/>
            <person name="Schurov I."/>
            <person name="Camargo L.M."/>
            <person name="Handford E.J."/>
            <person name="Duran-Jimeniz B."/>
            <person name="Hunt P."/>
            <person name="Millar J.K."/>
            <person name="Porteous D.J."/>
            <person name="Shearman M.S."/>
            <person name="Whiting P.J."/>
        </authorList>
    </citation>
    <scope>SUBCELLULAR LOCATION</scope>
</reference>
<reference key="16">
    <citation type="journal article" date="2007" name="Proc. Natl. Acad. Sci. U.S.A.">
        <title>Large-scale phosphorylation analysis of mouse liver.</title>
        <authorList>
            <person name="Villen J."/>
            <person name="Beausoleil S.A."/>
            <person name="Gerber S.A."/>
            <person name="Gygi S.P."/>
        </authorList>
    </citation>
    <scope>PHOSPHORYLATION [LARGE SCALE ANALYSIS] AT SER-215 AND THR-219</scope>
    <scope>IDENTIFICATION BY MASS SPECTROMETRY [LARGE SCALE ANALYSIS]</scope>
    <source>
        <tissue>Liver</tissue>
    </source>
</reference>
<reference key="17">
    <citation type="journal article" date="2010" name="Cell">
        <title>A tissue-specific atlas of mouse protein phosphorylation and expression.</title>
        <authorList>
            <person name="Huttlin E.L."/>
            <person name="Jedrychowski M.P."/>
            <person name="Elias J.E."/>
            <person name="Goswami T."/>
            <person name="Rad R."/>
            <person name="Beausoleil S.A."/>
            <person name="Villen J."/>
            <person name="Haas W."/>
            <person name="Sowa M.E."/>
            <person name="Gygi S.P."/>
        </authorList>
    </citation>
    <scope>PHOSPHORYLATION [LARGE SCALE ANALYSIS] AT SER-215 AND THR-219</scope>
    <scope>IDENTIFICATION BY MASS SPECTROMETRY [LARGE SCALE ANALYSIS]</scope>
    <source>
        <tissue>Brain</tissue>
        <tissue>Brown adipose tissue</tissue>
        <tissue>Spleen</tissue>
    </source>
</reference>
<reference key="18">
    <citation type="journal article" date="2016" name="JCI Insight">
        <title>PLEKHM1/DEF8/RAB7 complex regulates lysosome positioning and bone homeostasis.</title>
        <authorList>
            <person name="Fujiwara T."/>
            <person name="Ye S."/>
            <person name="Castro-Gomes T."/>
            <person name="Winchell C.G."/>
            <person name="Andrews N.W."/>
            <person name="Voth D.E."/>
            <person name="Varughese K.I."/>
            <person name="Mackintosh S.G."/>
            <person name="Feng Y."/>
            <person name="Pavlos N."/>
            <person name="Nakamura T."/>
            <person name="Manolagas S.C."/>
            <person name="Zhao H."/>
        </authorList>
    </citation>
    <scope>FUNCTION</scope>
    <scope>INTERACTION WITH PLEKHM1</scope>
</reference>
<feature type="chain" id="PRO_0000240212" description="Nuclear distribution protein nudE-like 1">
    <location>
        <begin position="1"/>
        <end position="345"/>
    </location>
</feature>
<feature type="region of interest" description="Self-association">
    <location>
        <begin position="56"/>
        <end position="166"/>
    </location>
</feature>
<feature type="region of interest" description="Interaction with KATNB1" evidence="16">
    <location>
        <begin position="64"/>
        <end position="189"/>
    </location>
</feature>
<feature type="region of interest" description="Required for interaction with PAFAH1B1" evidence="1">
    <location>
        <begin position="114"/>
        <end position="133"/>
    </location>
</feature>
<feature type="region of interest" description="Interaction with CENPF" evidence="1">
    <location>
        <begin position="175"/>
        <end position="345"/>
    </location>
</feature>
<feature type="region of interest" description="Interaction with YWHAE" evidence="9">
    <location>
        <begin position="189"/>
        <end position="256"/>
    </location>
</feature>
<feature type="region of interest" description="Interaction with NEFL" evidence="12">
    <location>
        <begin position="191"/>
        <end position="345"/>
    </location>
</feature>
<feature type="region of interest" description="Interaction with KATNA1" evidence="16">
    <location>
        <begin position="195"/>
        <end position="256"/>
    </location>
</feature>
<feature type="region of interest" description="Disordered" evidence="5">
    <location>
        <begin position="217"/>
        <end position="240"/>
    </location>
</feature>
<feature type="region of interest" description="Interaction with DISC1" evidence="1">
    <location>
        <begin position="241"/>
        <end position="280"/>
    </location>
</feature>
<feature type="region of interest" description="Required for localization to the centrosome and interaction with dynein, dynactin, tubulin gamma, PCM1 and PCNT" evidence="1">
    <location>
        <begin position="256"/>
        <end position="291"/>
    </location>
</feature>
<feature type="region of interest" description="Disordered" evidence="5">
    <location>
        <begin position="314"/>
        <end position="345"/>
    </location>
</feature>
<feature type="coiled-coil region" evidence="4">
    <location>
        <begin position="28"/>
        <end position="190"/>
    </location>
</feature>
<feature type="compositionally biased region" description="Low complexity" evidence="5">
    <location>
        <begin position="329"/>
        <end position="339"/>
    </location>
</feature>
<feature type="modified residue" description="Phosphoserine" evidence="22 23">
    <location>
        <position position="215"/>
    </location>
</feature>
<feature type="modified residue" description="Phosphothreonine" evidence="22 23">
    <location>
        <position position="219"/>
    </location>
</feature>
<feature type="modified residue" description="Phosphoserine" evidence="3">
    <location>
        <position position="231"/>
    </location>
</feature>
<feature type="modified residue" description="Phosphoserine; by CDK1" evidence="3">
    <location>
        <position position="242"/>
    </location>
</feature>
<feature type="modified residue" description="Phosphothreonine; by CDK1 and MAPK1" evidence="3">
    <location>
        <position position="245"/>
    </location>
</feature>
<feature type="modified residue" description="Phosphoserine" evidence="2">
    <location>
        <position position="344"/>
    </location>
</feature>
<feature type="lipid moiety-binding region" description="S-palmitoyl cysteine; by ZDHHC2, ZDHHC3 and ZDHHC7" evidence="1">
    <location>
        <position position="273"/>
    </location>
</feature>
<feature type="splice variant" id="VSP_019311" description="In isoform 2." evidence="18 19">
    <location>
        <begin position="316"/>
        <end position="345"/>
    </location>
</feature>
<feature type="mutagenesis site" description="Reduces phosphorylation by CDK5 and impairs interaction with YWHAE. Impairs interaction with KATNA1; when associated with A-219 and A-231." evidence="9 16">
    <original>S</original>
    <variation>A</variation>
    <location>
        <position position="198"/>
    </location>
</feature>
<feature type="mutagenesis site" description="Reduces phosphorylation by CDK5 and impairs interaction with YWHAE. Impairs interaction with KATNA1; when associated with A-198 and A-231." evidence="9 16">
    <original>T</original>
    <variation>A</variation>
    <location>
        <position position="219"/>
    </location>
</feature>
<feature type="mutagenesis site" description="Reduces phosphorylation by CDK5 and impairs interaction with YWHAE. Impairs interaction with KATNA1; when associated with A-198 and A-219." evidence="9 16">
    <original>S</original>
    <variation>A</variation>
    <location>
        <position position="231"/>
    </location>
</feature>
<feature type="mutagenesis site" description="Impairs interaction with DISC1." evidence="10">
    <original>L</original>
    <variation>A</variation>
    <location>
        <position position="266"/>
    </location>
</feature>
<feature type="mutagenesis site" description="Impairs interaction with DISC1." evidence="10">
    <original>E</original>
    <variation>A</variation>
    <location>
        <position position="267"/>
    </location>
</feature>
<feature type="sequence conflict" description="In Ref. 1; AAG10061." evidence="20" ref="1">
    <original>E</original>
    <variation>K</variation>
    <location>
        <position position="302"/>
    </location>
</feature>
<feature type="helix" evidence="24">
    <location>
        <begin position="246"/>
        <end position="272"/>
    </location>
</feature>
<organism>
    <name type="scientific">Mus musculus</name>
    <name type="common">Mouse</name>
    <dbReference type="NCBI Taxonomy" id="10090"/>
    <lineage>
        <taxon>Eukaryota</taxon>
        <taxon>Metazoa</taxon>
        <taxon>Chordata</taxon>
        <taxon>Craniata</taxon>
        <taxon>Vertebrata</taxon>
        <taxon>Euteleostomi</taxon>
        <taxon>Mammalia</taxon>
        <taxon>Eutheria</taxon>
        <taxon>Euarchontoglires</taxon>
        <taxon>Glires</taxon>
        <taxon>Rodentia</taxon>
        <taxon>Myomorpha</taxon>
        <taxon>Muroidea</taxon>
        <taxon>Muridae</taxon>
        <taxon>Murinae</taxon>
        <taxon>Mus</taxon>
        <taxon>Mus</taxon>
    </lineage>
</organism>
<evidence type="ECO:0000250" key="1"/>
<evidence type="ECO:0000250" key="2">
    <source>
        <dbReference type="UniProtKB" id="Q78PB6"/>
    </source>
</evidence>
<evidence type="ECO:0000250" key="3">
    <source>
        <dbReference type="UniProtKB" id="Q9GZM8"/>
    </source>
</evidence>
<evidence type="ECO:0000255" key="4"/>
<evidence type="ECO:0000256" key="5">
    <source>
        <dbReference type="SAM" id="MobiDB-lite"/>
    </source>
</evidence>
<evidence type="ECO:0000269" key="6">
    <source>
    </source>
</evidence>
<evidence type="ECO:0000269" key="7">
    <source>
    </source>
</evidence>
<evidence type="ECO:0000269" key="8">
    <source>
    </source>
</evidence>
<evidence type="ECO:0000269" key="9">
    <source>
    </source>
</evidence>
<evidence type="ECO:0000269" key="10">
    <source>
    </source>
</evidence>
<evidence type="ECO:0000269" key="11">
    <source>
    </source>
</evidence>
<evidence type="ECO:0000269" key="12">
    <source>
    </source>
</evidence>
<evidence type="ECO:0000269" key="13">
    <source>
    </source>
</evidence>
<evidence type="ECO:0000269" key="14">
    <source>
    </source>
</evidence>
<evidence type="ECO:0000269" key="15">
    <source>
    </source>
</evidence>
<evidence type="ECO:0000269" key="16">
    <source>
    </source>
</evidence>
<evidence type="ECO:0000269" key="17">
    <source>
    </source>
</evidence>
<evidence type="ECO:0000303" key="18">
    <source>
    </source>
</evidence>
<evidence type="ECO:0000303" key="19">
    <source>
    </source>
</evidence>
<evidence type="ECO:0000305" key="20"/>
<evidence type="ECO:0000312" key="21">
    <source>
        <dbReference type="MGI" id="MGI:1932915"/>
    </source>
</evidence>
<evidence type="ECO:0007744" key="22">
    <source>
    </source>
</evidence>
<evidence type="ECO:0007744" key="23">
    <source>
    </source>
</evidence>
<evidence type="ECO:0007829" key="24">
    <source>
        <dbReference type="PDB" id="6KZJ"/>
    </source>
</evidence>
<dbReference type="EMBL" id="AF290472">
    <property type="protein sequence ID" value="AAG10061.1"/>
    <property type="molecule type" value="mRNA"/>
</dbReference>
<dbReference type="EMBL" id="AF323918">
    <property type="protein sequence ID" value="AAG42496.1"/>
    <property type="molecule type" value="mRNA"/>
</dbReference>
<dbReference type="EMBL" id="AK011168">
    <property type="protein sequence ID" value="BAB27443.1"/>
    <property type="molecule type" value="mRNA"/>
</dbReference>
<dbReference type="EMBL" id="AL603662">
    <property type="status" value="NOT_ANNOTATED_CDS"/>
    <property type="molecule type" value="Genomic_DNA"/>
</dbReference>
<dbReference type="EMBL" id="BC021434">
    <property type="protein sequence ID" value="AAH21434.1"/>
    <property type="molecule type" value="mRNA"/>
</dbReference>
<dbReference type="EMBL" id="BC046796">
    <property type="protein sequence ID" value="AAH46796.1"/>
    <property type="molecule type" value="mRNA"/>
</dbReference>
<dbReference type="CCDS" id="CCDS24870.1">
    <molecule id="Q9ERR1-1"/>
</dbReference>
<dbReference type="RefSeq" id="NP_076157.2">
    <molecule id="Q9ERR1-1"/>
    <property type="nucleotide sequence ID" value="NM_023668.3"/>
</dbReference>
<dbReference type="RefSeq" id="XP_030102302.1">
    <molecule id="Q9ERR1-1"/>
    <property type="nucleotide sequence ID" value="XM_030246442.2"/>
</dbReference>
<dbReference type="PDB" id="5YI4">
    <property type="method" value="NMR"/>
    <property type="chains" value="A=238-284"/>
</dbReference>
<dbReference type="PDB" id="6KZJ">
    <property type="method" value="X-ray"/>
    <property type="resolution" value="1.50 A"/>
    <property type="chains" value="B/C=238-284"/>
</dbReference>
<dbReference type="PDBsum" id="5YI4"/>
<dbReference type="PDBsum" id="6KZJ"/>
<dbReference type="SMR" id="Q9ERR1"/>
<dbReference type="BioGRID" id="219922">
    <property type="interactions" value="51"/>
</dbReference>
<dbReference type="DIP" id="DIP-29553N"/>
<dbReference type="FunCoup" id="Q9ERR1">
    <property type="interactions" value="1575"/>
</dbReference>
<dbReference type="IntAct" id="Q9ERR1">
    <property type="interactions" value="24"/>
</dbReference>
<dbReference type="MINT" id="Q9ERR1"/>
<dbReference type="STRING" id="10090.ENSMUSP00000018880"/>
<dbReference type="iPTMnet" id="Q9ERR1"/>
<dbReference type="PhosphoSitePlus" id="Q9ERR1"/>
<dbReference type="SwissPalm" id="Q9ERR1"/>
<dbReference type="PaxDb" id="10090-ENSMUSP00000018880"/>
<dbReference type="PeptideAtlas" id="Q9ERR1"/>
<dbReference type="ProteomicsDB" id="252795">
    <molecule id="Q9ERR1-1"/>
</dbReference>
<dbReference type="ProteomicsDB" id="252796">
    <molecule id="Q9ERR1-2"/>
</dbReference>
<dbReference type="Pumba" id="Q9ERR1"/>
<dbReference type="Antibodypedia" id="12558">
    <property type="antibodies" value="497 antibodies from 37 providers"/>
</dbReference>
<dbReference type="DNASU" id="83431"/>
<dbReference type="Ensembl" id="ENSMUST00000018880.14">
    <molecule id="Q9ERR1-1"/>
    <property type="protein sequence ID" value="ENSMUSP00000018880.8"/>
    <property type="gene ID" value="ENSMUSG00000018736.15"/>
</dbReference>
<dbReference type="Ensembl" id="ENSMUST00000101017.9">
    <molecule id="Q9ERR1-2"/>
    <property type="protein sequence ID" value="ENSMUSP00000098579.3"/>
    <property type="gene ID" value="ENSMUSG00000018736.15"/>
</dbReference>
<dbReference type="Ensembl" id="ENSMUST00000108672.2">
    <molecule id="Q9ERR1-2"/>
    <property type="protein sequence ID" value="ENSMUSP00000104312.2"/>
    <property type="gene ID" value="ENSMUSG00000018736.15"/>
</dbReference>
<dbReference type="GeneID" id="83431"/>
<dbReference type="KEGG" id="mmu:83431"/>
<dbReference type="UCSC" id="uc007joc.3">
    <molecule id="Q9ERR1-1"/>
    <property type="organism name" value="mouse"/>
</dbReference>
<dbReference type="AGR" id="MGI:1932915"/>
<dbReference type="CTD" id="81565"/>
<dbReference type="MGI" id="MGI:1932915">
    <property type="gene designation" value="Ndel1"/>
</dbReference>
<dbReference type="VEuPathDB" id="HostDB:ENSMUSG00000018736"/>
<dbReference type="eggNOG" id="KOG1853">
    <property type="taxonomic scope" value="Eukaryota"/>
</dbReference>
<dbReference type="GeneTree" id="ENSGT00390000000111"/>
<dbReference type="HOGENOM" id="CLU_057872_0_0_1"/>
<dbReference type="InParanoid" id="Q9ERR1"/>
<dbReference type="OMA" id="MEENSIN"/>
<dbReference type="OrthoDB" id="5877028at2759"/>
<dbReference type="PhylomeDB" id="Q9ERR1"/>
<dbReference type="TreeFam" id="TF325693"/>
<dbReference type="Reactome" id="R-MMU-141444">
    <property type="pathway name" value="Amplification of signal from unattached kinetochores via a MAD2 inhibitory signal"/>
</dbReference>
<dbReference type="Reactome" id="R-MMU-2467813">
    <property type="pathway name" value="Separation of Sister Chromatids"/>
</dbReference>
<dbReference type="Reactome" id="R-MMU-2500257">
    <property type="pathway name" value="Resolution of Sister Chromatid Cohesion"/>
</dbReference>
<dbReference type="Reactome" id="R-MMU-5663220">
    <property type="pathway name" value="RHO GTPases Activate Formins"/>
</dbReference>
<dbReference type="Reactome" id="R-MMU-68877">
    <property type="pathway name" value="Mitotic Prometaphase"/>
</dbReference>
<dbReference type="Reactome" id="R-MMU-9648025">
    <property type="pathway name" value="EML4 and NUDC in mitotic spindle formation"/>
</dbReference>
<dbReference type="BioGRID-ORCS" id="83431">
    <property type="hits" value="0 hits in 77 CRISPR screens"/>
</dbReference>
<dbReference type="CD-CODE" id="01CA17F3">
    <property type="entry name" value="Centrosome"/>
</dbReference>
<dbReference type="CD-CODE" id="CE726F99">
    <property type="entry name" value="Postsynaptic density"/>
</dbReference>
<dbReference type="ChiTaRS" id="Ndel1">
    <property type="organism name" value="mouse"/>
</dbReference>
<dbReference type="PRO" id="PR:Q9ERR1"/>
<dbReference type="Proteomes" id="UP000000589">
    <property type="component" value="Chromosome 11"/>
</dbReference>
<dbReference type="RNAct" id="Q9ERR1">
    <property type="molecule type" value="protein"/>
</dbReference>
<dbReference type="Bgee" id="ENSMUSG00000018736">
    <property type="expression patterns" value="Expressed in seminal vesicle and 295 other cell types or tissues"/>
</dbReference>
<dbReference type="GO" id="GO:0030424">
    <property type="term" value="C:axon"/>
    <property type="evidence" value="ECO:0000314"/>
    <property type="project" value="MGI"/>
</dbReference>
<dbReference type="GO" id="GO:1904115">
    <property type="term" value="C:axon cytoplasm"/>
    <property type="evidence" value="ECO:0007669"/>
    <property type="project" value="GOC"/>
</dbReference>
<dbReference type="GO" id="GO:0043203">
    <property type="term" value="C:axon hillock"/>
    <property type="evidence" value="ECO:0000314"/>
    <property type="project" value="MGI"/>
</dbReference>
<dbReference type="GO" id="GO:0031252">
    <property type="term" value="C:cell leading edge"/>
    <property type="evidence" value="ECO:0000314"/>
    <property type="project" value="MGI"/>
</dbReference>
<dbReference type="GO" id="GO:0005813">
    <property type="term" value="C:centrosome"/>
    <property type="evidence" value="ECO:0000314"/>
    <property type="project" value="CAFA"/>
</dbReference>
<dbReference type="GO" id="GO:0000776">
    <property type="term" value="C:kinetochore"/>
    <property type="evidence" value="ECO:0007669"/>
    <property type="project" value="UniProtKB-KW"/>
</dbReference>
<dbReference type="GO" id="GO:0005874">
    <property type="term" value="C:microtubule"/>
    <property type="evidence" value="ECO:0007669"/>
    <property type="project" value="UniProtKB-KW"/>
</dbReference>
<dbReference type="GO" id="GO:0005875">
    <property type="term" value="C:microtubule associated complex"/>
    <property type="evidence" value="ECO:0000314"/>
    <property type="project" value="MGI"/>
</dbReference>
<dbReference type="GO" id="GO:0005815">
    <property type="term" value="C:microtubule organizing center"/>
    <property type="evidence" value="ECO:0000316"/>
    <property type="project" value="MGI"/>
</dbReference>
<dbReference type="GO" id="GO:0060053">
    <property type="term" value="C:neurofilament cytoskeleton"/>
    <property type="evidence" value="ECO:0000314"/>
    <property type="project" value="MGI"/>
</dbReference>
<dbReference type="GO" id="GO:0005635">
    <property type="term" value="C:nuclear envelope"/>
    <property type="evidence" value="ECO:0000250"/>
    <property type="project" value="MGI"/>
</dbReference>
<dbReference type="GO" id="GO:0005819">
    <property type="term" value="C:spindle"/>
    <property type="evidence" value="ECO:0007669"/>
    <property type="project" value="UniProtKB-SubCell"/>
</dbReference>
<dbReference type="GO" id="GO:0008021">
    <property type="term" value="C:synaptic vesicle"/>
    <property type="evidence" value="ECO:0000314"/>
    <property type="project" value="MGI"/>
</dbReference>
<dbReference type="GO" id="GO:0043014">
    <property type="term" value="F:alpha-tubulin binding"/>
    <property type="evidence" value="ECO:0000314"/>
    <property type="project" value="MGI"/>
</dbReference>
<dbReference type="GO" id="GO:0048487">
    <property type="term" value="F:beta-tubulin binding"/>
    <property type="evidence" value="ECO:0000314"/>
    <property type="project" value="MGI"/>
</dbReference>
<dbReference type="GO" id="GO:0042802">
    <property type="term" value="F:identical protein binding"/>
    <property type="evidence" value="ECO:0000353"/>
    <property type="project" value="IntAct"/>
</dbReference>
<dbReference type="GO" id="GO:0008017">
    <property type="term" value="F:microtubule binding"/>
    <property type="evidence" value="ECO:0000314"/>
    <property type="project" value="MGI"/>
</dbReference>
<dbReference type="GO" id="GO:0016477">
    <property type="term" value="P:cell migration"/>
    <property type="evidence" value="ECO:0000315"/>
    <property type="project" value="MGI"/>
</dbReference>
<dbReference type="GO" id="GO:0021955">
    <property type="term" value="P:central nervous system neuron axonogenesis"/>
    <property type="evidence" value="ECO:0000315"/>
    <property type="project" value="MGI"/>
</dbReference>
<dbReference type="GO" id="GO:0051642">
    <property type="term" value="P:centrosome localization"/>
    <property type="evidence" value="ECO:0000315"/>
    <property type="project" value="MGI"/>
</dbReference>
<dbReference type="GO" id="GO:0021799">
    <property type="term" value="P:cerebral cortex radially oriented cell migration"/>
    <property type="evidence" value="ECO:0000315"/>
    <property type="project" value="DFLAT"/>
</dbReference>
<dbReference type="GO" id="GO:0007059">
    <property type="term" value="P:chromosome segregation"/>
    <property type="evidence" value="ECO:0007669"/>
    <property type="project" value="Ensembl"/>
</dbReference>
<dbReference type="GO" id="GO:0001833">
    <property type="term" value="P:inner cell mass cell proliferation"/>
    <property type="evidence" value="ECO:0000315"/>
    <property type="project" value="MGI"/>
</dbReference>
<dbReference type="GO" id="GO:0008286">
    <property type="term" value="P:insulin receptor signaling pathway"/>
    <property type="evidence" value="ECO:0000314"/>
    <property type="project" value="CAFA"/>
</dbReference>
<dbReference type="GO" id="GO:0032418">
    <property type="term" value="P:lysosome localization"/>
    <property type="evidence" value="ECO:0000315"/>
    <property type="project" value="UniProtKB"/>
</dbReference>
<dbReference type="GO" id="GO:0000226">
    <property type="term" value="P:microtubule cytoskeleton organization"/>
    <property type="evidence" value="ECO:0000316"/>
    <property type="project" value="MGI"/>
</dbReference>
<dbReference type="GO" id="GO:0007100">
    <property type="term" value="P:mitotic centrosome separation"/>
    <property type="evidence" value="ECO:0000315"/>
    <property type="project" value="MGI"/>
</dbReference>
<dbReference type="GO" id="GO:0060052">
    <property type="term" value="P:neurofilament cytoskeleton organization"/>
    <property type="evidence" value="ECO:0000315"/>
    <property type="project" value="MGI"/>
</dbReference>
<dbReference type="GO" id="GO:0001764">
    <property type="term" value="P:neuron migration"/>
    <property type="evidence" value="ECO:0000316"/>
    <property type="project" value="MGI"/>
</dbReference>
<dbReference type="GO" id="GO:1990138">
    <property type="term" value="P:neuron projection extension"/>
    <property type="evidence" value="ECO:0000316"/>
    <property type="project" value="MGI"/>
</dbReference>
<dbReference type="GO" id="GO:0051081">
    <property type="term" value="P:nuclear membrane disassembly"/>
    <property type="evidence" value="ECO:0000250"/>
    <property type="project" value="MGI"/>
</dbReference>
<dbReference type="GO" id="GO:1900029">
    <property type="term" value="P:positive regulation of ruffle assembly"/>
    <property type="evidence" value="ECO:0000315"/>
    <property type="project" value="UniProtKB"/>
</dbReference>
<dbReference type="GO" id="GO:0140650">
    <property type="term" value="P:radial glia-guided pyramidal neuron migration"/>
    <property type="evidence" value="ECO:0000316"/>
    <property type="project" value="MGI"/>
</dbReference>
<dbReference type="GO" id="GO:0033157">
    <property type="term" value="P:regulation of intracellular protein transport"/>
    <property type="evidence" value="ECO:0007669"/>
    <property type="project" value="Ensembl"/>
</dbReference>
<dbReference type="GO" id="GO:0010975">
    <property type="term" value="P:regulation of neuron projection development"/>
    <property type="evidence" value="ECO:0000315"/>
    <property type="project" value="UniProtKB"/>
</dbReference>
<dbReference type="GO" id="GO:0008090">
    <property type="term" value="P:retrograde axonal transport"/>
    <property type="evidence" value="ECO:0000314"/>
    <property type="project" value="MGI"/>
</dbReference>
<dbReference type="GO" id="GO:0047496">
    <property type="term" value="P:vesicle transport along microtubule"/>
    <property type="evidence" value="ECO:0000316"/>
    <property type="project" value="MGI"/>
</dbReference>
<dbReference type="Gene3D" id="6.10.250.1080">
    <property type="match status" value="1"/>
</dbReference>
<dbReference type="InterPro" id="IPR033494">
    <property type="entry name" value="NUDE"/>
</dbReference>
<dbReference type="InterPro" id="IPR006964">
    <property type="entry name" value="NUDE_dom"/>
</dbReference>
<dbReference type="PANTHER" id="PTHR10921">
    <property type="entry name" value="NUCLEAR DISTRIBUTION PROTEIN NUDE HOMOLOG 1"/>
    <property type="match status" value="1"/>
</dbReference>
<dbReference type="PANTHER" id="PTHR10921:SF0">
    <property type="entry name" value="NUCLEAR DISTRIBUTION PROTEIN NUDE-LIKE 1"/>
    <property type="match status" value="1"/>
</dbReference>
<dbReference type="Pfam" id="PF04880">
    <property type="entry name" value="NUDE_C"/>
    <property type="match status" value="1"/>
</dbReference>
<keyword id="KW-0002">3D-structure</keyword>
<keyword id="KW-0025">Alternative splicing</keyword>
<keyword id="KW-0137">Centromere</keyword>
<keyword id="KW-0158">Chromosome</keyword>
<keyword id="KW-0175">Coiled coil</keyword>
<keyword id="KW-0963">Cytoplasm</keyword>
<keyword id="KW-0206">Cytoskeleton</keyword>
<keyword id="KW-0217">Developmental protein</keyword>
<keyword id="KW-0221">Differentiation</keyword>
<keyword id="KW-0995">Kinetochore</keyword>
<keyword id="KW-0449">Lipoprotein</keyword>
<keyword id="KW-0493">Microtubule</keyword>
<keyword id="KW-0524">Neurogenesis</keyword>
<keyword id="KW-0564">Palmitate</keyword>
<keyword id="KW-0597">Phosphoprotein</keyword>
<keyword id="KW-1185">Reference proteome</keyword>
<keyword id="KW-0813">Transport</keyword>
<protein>
    <recommendedName>
        <fullName>Nuclear distribution protein nudE-like 1</fullName>
    </recommendedName>
    <alternativeName>
        <fullName>Protein mNudE-like</fullName>
        <shortName>Protein Nudel</shortName>
        <shortName>mNudE-L</shortName>
    </alternativeName>
</protein>
<gene>
    <name evidence="21" type="primary">Ndel1</name>
    <name type="synonym">Nudel</name>
</gene>
<sequence>MDGEDIPDFSSLKEETAYWKELSLKYKQSFQEARDELVEFQEGSRELEAELEAQLVQAEQRNRDLQADNQRLKYEVEALKEKLEHQYAQSYKQVSVLEDDLSQTRAIKEQLHKYVRELEQANDDLERAKRATIVSLEDFEQRLNQAIERNAFLESELDEKESLLVSVQRLKDEARDLRQELAVRERQQEVTRKSAPSSPTLDCEKMDSAVQASLSLPATPVGKGTENSFPSPKAIPNGFGTSPLTPSARISALNIVGDLLRKVGALESKLAACRNFAKDQASRKSYVPGSVNCGVMNSNGPECPRSGRATFFHKGAVNGFDPAPPPPGLGSSRPSSAPGMLPLSV</sequence>